<protein>
    <recommendedName>
        <fullName evidence="1">UDP-N-acetylmuramate--L-alanine ligase</fullName>
        <ecNumber evidence="1">6.3.2.8</ecNumber>
    </recommendedName>
    <alternativeName>
        <fullName evidence="1">UDP-N-acetylmuramoyl-L-alanine synthetase</fullName>
    </alternativeName>
</protein>
<feature type="chain" id="PRO_0000242597" description="UDP-N-acetylmuramate--L-alanine ligase">
    <location>
        <begin position="1"/>
        <end position="490"/>
    </location>
</feature>
<feature type="binding site" evidence="1">
    <location>
        <begin position="126"/>
        <end position="132"/>
    </location>
    <ligand>
        <name>ATP</name>
        <dbReference type="ChEBI" id="CHEBI:30616"/>
    </ligand>
</feature>
<comment type="function">
    <text evidence="1">Cell wall formation.</text>
</comment>
<comment type="catalytic activity">
    <reaction evidence="1">
        <text>UDP-N-acetyl-alpha-D-muramate + L-alanine + ATP = UDP-N-acetyl-alpha-D-muramoyl-L-alanine + ADP + phosphate + H(+)</text>
        <dbReference type="Rhea" id="RHEA:23372"/>
        <dbReference type="ChEBI" id="CHEBI:15378"/>
        <dbReference type="ChEBI" id="CHEBI:30616"/>
        <dbReference type="ChEBI" id="CHEBI:43474"/>
        <dbReference type="ChEBI" id="CHEBI:57972"/>
        <dbReference type="ChEBI" id="CHEBI:70757"/>
        <dbReference type="ChEBI" id="CHEBI:83898"/>
        <dbReference type="ChEBI" id="CHEBI:456216"/>
        <dbReference type="EC" id="6.3.2.8"/>
    </reaction>
</comment>
<comment type="pathway">
    <text evidence="1">Cell wall biogenesis; peptidoglycan biosynthesis.</text>
</comment>
<comment type="subcellular location">
    <subcellularLocation>
        <location evidence="1">Cytoplasm</location>
    </subcellularLocation>
</comment>
<comment type="similarity">
    <text evidence="1">Belongs to the MurCDEF family.</text>
</comment>
<proteinExistence type="inferred from homology"/>
<evidence type="ECO:0000255" key="1">
    <source>
        <dbReference type="HAMAP-Rule" id="MF_00046"/>
    </source>
</evidence>
<name>MURC_SODGM</name>
<dbReference type="EC" id="6.3.2.8" evidence="1"/>
<dbReference type="EMBL" id="AP008232">
    <property type="protein sequence ID" value="BAE73725.1"/>
    <property type="molecule type" value="Genomic_DNA"/>
</dbReference>
<dbReference type="RefSeq" id="WP_011410423.1">
    <property type="nucleotide sequence ID" value="NC_007712.1"/>
</dbReference>
<dbReference type="SMR" id="Q2NVV0"/>
<dbReference type="STRING" id="343509.SG0450"/>
<dbReference type="KEGG" id="sgl:SG0450"/>
<dbReference type="eggNOG" id="COG0773">
    <property type="taxonomic scope" value="Bacteria"/>
</dbReference>
<dbReference type="HOGENOM" id="CLU_028104_2_2_6"/>
<dbReference type="OrthoDB" id="9804126at2"/>
<dbReference type="BioCyc" id="SGLO343509:SGP1_RS04020-MONOMER"/>
<dbReference type="UniPathway" id="UPA00219"/>
<dbReference type="Proteomes" id="UP000001932">
    <property type="component" value="Chromosome"/>
</dbReference>
<dbReference type="GO" id="GO:0005737">
    <property type="term" value="C:cytoplasm"/>
    <property type="evidence" value="ECO:0007669"/>
    <property type="project" value="UniProtKB-SubCell"/>
</dbReference>
<dbReference type="GO" id="GO:0005524">
    <property type="term" value="F:ATP binding"/>
    <property type="evidence" value="ECO:0007669"/>
    <property type="project" value="UniProtKB-UniRule"/>
</dbReference>
<dbReference type="GO" id="GO:0008763">
    <property type="term" value="F:UDP-N-acetylmuramate-L-alanine ligase activity"/>
    <property type="evidence" value="ECO:0007669"/>
    <property type="project" value="UniProtKB-UniRule"/>
</dbReference>
<dbReference type="GO" id="GO:0051301">
    <property type="term" value="P:cell division"/>
    <property type="evidence" value="ECO:0007669"/>
    <property type="project" value="UniProtKB-KW"/>
</dbReference>
<dbReference type="GO" id="GO:0071555">
    <property type="term" value="P:cell wall organization"/>
    <property type="evidence" value="ECO:0007669"/>
    <property type="project" value="UniProtKB-KW"/>
</dbReference>
<dbReference type="GO" id="GO:0009252">
    <property type="term" value="P:peptidoglycan biosynthetic process"/>
    <property type="evidence" value="ECO:0007669"/>
    <property type="project" value="UniProtKB-UniRule"/>
</dbReference>
<dbReference type="GO" id="GO:0008360">
    <property type="term" value="P:regulation of cell shape"/>
    <property type="evidence" value="ECO:0007669"/>
    <property type="project" value="UniProtKB-KW"/>
</dbReference>
<dbReference type="FunFam" id="3.40.1190.10:FF:000001">
    <property type="entry name" value="UDP-N-acetylmuramate--L-alanine ligase"/>
    <property type="match status" value="1"/>
</dbReference>
<dbReference type="FunFam" id="3.40.50.720:FF:000046">
    <property type="entry name" value="UDP-N-acetylmuramate--L-alanine ligase"/>
    <property type="match status" value="1"/>
</dbReference>
<dbReference type="FunFam" id="3.90.190.20:FF:000001">
    <property type="entry name" value="UDP-N-acetylmuramate--L-alanine ligase"/>
    <property type="match status" value="1"/>
</dbReference>
<dbReference type="Gene3D" id="3.90.190.20">
    <property type="entry name" value="Mur ligase, C-terminal domain"/>
    <property type="match status" value="1"/>
</dbReference>
<dbReference type="Gene3D" id="3.40.1190.10">
    <property type="entry name" value="Mur-like, catalytic domain"/>
    <property type="match status" value="1"/>
</dbReference>
<dbReference type="Gene3D" id="3.40.50.720">
    <property type="entry name" value="NAD(P)-binding Rossmann-like Domain"/>
    <property type="match status" value="1"/>
</dbReference>
<dbReference type="HAMAP" id="MF_00046">
    <property type="entry name" value="MurC"/>
    <property type="match status" value="1"/>
</dbReference>
<dbReference type="InterPro" id="IPR036565">
    <property type="entry name" value="Mur-like_cat_sf"/>
</dbReference>
<dbReference type="InterPro" id="IPR004101">
    <property type="entry name" value="Mur_ligase_C"/>
</dbReference>
<dbReference type="InterPro" id="IPR036615">
    <property type="entry name" value="Mur_ligase_C_dom_sf"/>
</dbReference>
<dbReference type="InterPro" id="IPR013221">
    <property type="entry name" value="Mur_ligase_cen"/>
</dbReference>
<dbReference type="InterPro" id="IPR000713">
    <property type="entry name" value="Mur_ligase_N"/>
</dbReference>
<dbReference type="InterPro" id="IPR050061">
    <property type="entry name" value="MurCDEF_pg_biosynth"/>
</dbReference>
<dbReference type="InterPro" id="IPR005758">
    <property type="entry name" value="UDP-N-AcMur_Ala_ligase_MurC"/>
</dbReference>
<dbReference type="NCBIfam" id="TIGR01082">
    <property type="entry name" value="murC"/>
    <property type="match status" value="1"/>
</dbReference>
<dbReference type="PANTHER" id="PTHR43445:SF3">
    <property type="entry name" value="UDP-N-ACETYLMURAMATE--L-ALANINE LIGASE"/>
    <property type="match status" value="1"/>
</dbReference>
<dbReference type="PANTHER" id="PTHR43445">
    <property type="entry name" value="UDP-N-ACETYLMURAMATE--L-ALANINE LIGASE-RELATED"/>
    <property type="match status" value="1"/>
</dbReference>
<dbReference type="Pfam" id="PF01225">
    <property type="entry name" value="Mur_ligase"/>
    <property type="match status" value="1"/>
</dbReference>
<dbReference type="Pfam" id="PF02875">
    <property type="entry name" value="Mur_ligase_C"/>
    <property type="match status" value="1"/>
</dbReference>
<dbReference type="Pfam" id="PF08245">
    <property type="entry name" value="Mur_ligase_M"/>
    <property type="match status" value="1"/>
</dbReference>
<dbReference type="SUPFAM" id="SSF51984">
    <property type="entry name" value="MurCD N-terminal domain"/>
    <property type="match status" value="1"/>
</dbReference>
<dbReference type="SUPFAM" id="SSF53623">
    <property type="entry name" value="MurD-like peptide ligases, catalytic domain"/>
    <property type="match status" value="1"/>
</dbReference>
<dbReference type="SUPFAM" id="SSF53244">
    <property type="entry name" value="MurD-like peptide ligases, peptide-binding domain"/>
    <property type="match status" value="1"/>
</dbReference>
<accession>Q2NVV0</accession>
<keyword id="KW-0067">ATP-binding</keyword>
<keyword id="KW-0131">Cell cycle</keyword>
<keyword id="KW-0132">Cell division</keyword>
<keyword id="KW-0133">Cell shape</keyword>
<keyword id="KW-0961">Cell wall biogenesis/degradation</keyword>
<keyword id="KW-0963">Cytoplasm</keyword>
<keyword id="KW-0436">Ligase</keyword>
<keyword id="KW-0547">Nucleotide-binding</keyword>
<keyword id="KW-0573">Peptidoglycan synthesis</keyword>
<gene>
    <name evidence="1" type="primary">murC</name>
    <name type="ordered locus">SG0450</name>
</gene>
<sequence>MNTQQLAKLRTFVPEMRRVRQIHFVGIGGAGMGGIAEVLANEGYQISGSDLAPNAVTQQLTDLGAQIYFNHRPENISDASVVVVSSAIAADNPEIVAAKEVRIPVIQRAEMLAELMRFRHGIAIAGTHGKTTTTAMVASIYAEAGLDPTFVNGGLVKAAGVHARLGCSRYLIAEADESDASFLHLQPMVAIITNIEADHMDTYQGDFENLKQTFINFLHNLPFYGRAVMCIDDPVIRELLPRVGRQITTYGFSDDADLRITDYRQDGARGSFTFTRQEKADLRVELNAPGRHNALNAVAAIAVATEEGINDESILQAMLQFQGTGRRFDDLGHYDLVNVNGKTGEVMLVDDYGHHPTEVDATIKAARAGWPDKRLVMVFQPHRYTRTRDLYDDFANVLSGVDVLLMLDVYPAGEAPIPGADSRSLCRTIRGRGKVDPILVPDMETLPATLAQVLQDNDLVLMQGAGTVGKIARKLADSRLQPQPGEGRHG</sequence>
<organism>
    <name type="scientific">Sodalis glossinidius (strain morsitans)</name>
    <dbReference type="NCBI Taxonomy" id="343509"/>
    <lineage>
        <taxon>Bacteria</taxon>
        <taxon>Pseudomonadati</taxon>
        <taxon>Pseudomonadota</taxon>
        <taxon>Gammaproteobacteria</taxon>
        <taxon>Enterobacterales</taxon>
        <taxon>Bruguierivoracaceae</taxon>
        <taxon>Sodalis</taxon>
    </lineage>
</organism>
<reference key="1">
    <citation type="journal article" date="2006" name="Genome Res.">
        <title>Massive genome erosion and functional adaptations provide insights into the symbiotic lifestyle of Sodalis glossinidius in the tsetse host.</title>
        <authorList>
            <person name="Toh H."/>
            <person name="Weiss B.L."/>
            <person name="Perkin S.A.H."/>
            <person name="Yamashita A."/>
            <person name="Oshima K."/>
            <person name="Hattori M."/>
            <person name="Aksoy S."/>
        </authorList>
    </citation>
    <scope>NUCLEOTIDE SEQUENCE [LARGE SCALE GENOMIC DNA]</scope>
    <source>
        <strain>morsitans</strain>
    </source>
</reference>